<evidence type="ECO:0000250" key="1"/>
<evidence type="ECO:0000250" key="2">
    <source>
        <dbReference type="UniProtKB" id="P00157"/>
    </source>
</evidence>
<evidence type="ECO:0000255" key="3">
    <source>
        <dbReference type="PROSITE-ProRule" id="PRU00967"/>
    </source>
</evidence>
<evidence type="ECO:0000255" key="4">
    <source>
        <dbReference type="PROSITE-ProRule" id="PRU00968"/>
    </source>
</evidence>
<protein>
    <recommendedName>
        <fullName>Cytochrome b</fullName>
    </recommendedName>
    <alternativeName>
        <fullName>Complex III subunit 3</fullName>
    </alternativeName>
    <alternativeName>
        <fullName>Complex III subunit III</fullName>
    </alternativeName>
    <alternativeName>
        <fullName>Cytochrome b-c1 complex subunit 3</fullName>
    </alternativeName>
    <alternativeName>
        <fullName>Ubiquinol-cytochrome-c reductase complex cytochrome b subunit</fullName>
    </alternativeName>
</protein>
<keyword id="KW-0249">Electron transport</keyword>
<keyword id="KW-0349">Heme</keyword>
<keyword id="KW-0408">Iron</keyword>
<keyword id="KW-0472">Membrane</keyword>
<keyword id="KW-0479">Metal-binding</keyword>
<keyword id="KW-0496">Mitochondrion</keyword>
<keyword id="KW-0999">Mitochondrion inner membrane</keyword>
<keyword id="KW-0679">Respiratory chain</keyword>
<keyword id="KW-0812">Transmembrane</keyword>
<keyword id="KW-1133">Transmembrane helix</keyword>
<keyword id="KW-0813">Transport</keyword>
<keyword id="KW-0830">Ubiquinone</keyword>
<name>CYB_CHAPR</name>
<accession>Q508K8</accession>
<dbReference type="EMBL" id="AY926395">
    <property type="protein sequence ID" value="AAY23238.1"/>
    <property type="molecule type" value="Genomic_DNA"/>
</dbReference>
<dbReference type="SMR" id="Q508K8"/>
<dbReference type="GO" id="GO:0005743">
    <property type="term" value="C:mitochondrial inner membrane"/>
    <property type="evidence" value="ECO:0007669"/>
    <property type="project" value="UniProtKB-SubCell"/>
</dbReference>
<dbReference type="GO" id="GO:0045275">
    <property type="term" value="C:respiratory chain complex III"/>
    <property type="evidence" value="ECO:0007669"/>
    <property type="project" value="InterPro"/>
</dbReference>
<dbReference type="GO" id="GO:0046872">
    <property type="term" value="F:metal ion binding"/>
    <property type="evidence" value="ECO:0007669"/>
    <property type="project" value="UniProtKB-KW"/>
</dbReference>
<dbReference type="GO" id="GO:0008121">
    <property type="term" value="F:ubiquinol-cytochrome-c reductase activity"/>
    <property type="evidence" value="ECO:0007669"/>
    <property type="project" value="InterPro"/>
</dbReference>
<dbReference type="GO" id="GO:0006122">
    <property type="term" value="P:mitochondrial electron transport, ubiquinol to cytochrome c"/>
    <property type="evidence" value="ECO:0007669"/>
    <property type="project" value="TreeGrafter"/>
</dbReference>
<dbReference type="CDD" id="cd00290">
    <property type="entry name" value="cytochrome_b_C"/>
    <property type="match status" value="1"/>
</dbReference>
<dbReference type="CDD" id="cd00284">
    <property type="entry name" value="Cytochrome_b_N"/>
    <property type="match status" value="1"/>
</dbReference>
<dbReference type="FunFam" id="1.20.810.10:FF:000002">
    <property type="entry name" value="Cytochrome b"/>
    <property type="match status" value="1"/>
</dbReference>
<dbReference type="Gene3D" id="1.20.810.10">
    <property type="entry name" value="Cytochrome Bc1 Complex, Chain C"/>
    <property type="match status" value="1"/>
</dbReference>
<dbReference type="InterPro" id="IPR005798">
    <property type="entry name" value="Cyt_b/b6_C"/>
</dbReference>
<dbReference type="InterPro" id="IPR036150">
    <property type="entry name" value="Cyt_b/b6_C_sf"/>
</dbReference>
<dbReference type="InterPro" id="IPR005797">
    <property type="entry name" value="Cyt_b/b6_N"/>
</dbReference>
<dbReference type="InterPro" id="IPR027387">
    <property type="entry name" value="Cytb/b6-like_sf"/>
</dbReference>
<dbReference type="InterPro" id="IPR030689">
    <property type="entry name" value="Cytochrome_b"/>
</dbReference>
<dbReference type="InterPro" id="IPR048260">
    <property type="entry name" value="Cytochrome_b_C_euk/bac"/>
</dbReference>
<dbReference type="InterPro" id="IPR048259">
    <property type="entry name" value="Cytochrome_b_N_euk/bac"/>
</dbReference>
<dbReference type="InterPro" id="IPR016174">
    <property type="entry name" value="Di-haem_cyt_TM"/>
</dbReference>
<dbReference type="PANTHER" id="PTHR19271">
    <property type="entry name" value="CYTOCHROME B"/>
    <property type="match status" value="1"/>
</dbReference>
<dbReference type="PANTHER" id="PTHR19271:SF16">
    <property type="entry name" value="CYTOCHROME B"/>
    <property type="match status" value="1"/>
</dbReference>
<dbReference type="Pfam" id="PF00032">
    <property type="entry name" value="Cytochrom_B_C"/>
    <property type="match status" value="1"/>
</dbReference>
<dbReference type="Pfam" id="PF00033">
    <property type="entry name" value="Cytochrome_B"/>
    <property type="match status" value="1"/>
</dbReference>
<dbReference type="PIRSF" id="PIRSF038885">
    <property type="entry name" value="COB"/>
    <property type="match status" value="1"/>
</dbReference>
<dbReference type="SUPFAM" id="SSF81648">
    <property type="entry name" value="a domain/subunit of cytochrome bc1 complex (Ubiquinol-cytochrome c reductase)"/>
    <property type="match status" value="1"/>
</dbReference>
<dbReference type="SUPFAM" id="SSF81342">
    <property type="entry name" value="Transmembrane di-heme cytochromes"/>
    <property type="match status" value="1"/>
</dbReference>
<dbReference type="PROSITE" id="PS51003">
    <property type="entry name" value="CYTB_CTER"/>
    <property type="match status" value="1"/>
</dbReference>
<dbReference type="PROSITE" id="PS51002">
    <property type="entry name" value="CYTB_NTER"/>
    <property type="match status" value="1"/>
</dbReference>
<feature type="chain" id="PRO_0000255001" description="Cytochrome b">
    <location>
        <begin position="1"/>
        <end position="379"/>
    </location>
</feature>
<feature type="transmembrane region" description="Helical" evidence="2">
    <location>
        <begin position="33"/>
        <end position="53"/>
    </location>
</feature>
<feature type="transmembrane region" description="Helical" evidence="2">
    <location>
        <begin position="77"/>
        <end position="98"/>
    </location>
</feature>
<feature type="transmembrane region" description="Helical" evidence="2">
    <location>
        <begin position="113"/>
        <end position="133"/>
    </location>
</feature>
<feature type="transmembrane region" description="Helical" evidence="2">
    <location>
        <begin position="178"/>
        <end position="198"/>
    </location>
</feature>
<feature type="transmembrane region" description="Helical" evidence="2">
    <location>
        <begin position="226"/>
        <end position="246"/>
    </location>
</feature>
<feature type="transmembrane region" description="Helical" evidence="2">
    <location>
        <begin position="288"/>
        <end position="308"/>
    </location>
</feature>
<feature type="transmembrane region" description="Helical" evidence="2">
    <location>
        <begin position="320"/>
        <end position="340"/>
    </location>
</feature>
<feature type="transmembrane region" description="Helical" evidence="2">
    <location>
        <begin position="347"/>
        <end position="367"/>
    </location>
</feature>
<feature type="binding site" description="axial binding residue" evidence="2">
    <location>
        <position position="83"/>
    </location>
    <ligand>
        <name>heme b</name>
        <dbReference type="ChEBI" id="CHEBI:60344"/>
        <label>b562</label>
    </ligand>
    <ligandPart>
        <name>Fe</name>
        <dbReference type="ChEBI" id="CHEBI:18248"/>
    </ligandPart>
</feature>
<feature type="binding site" description="axial binding residue" evidence="2">
    <location>
        <position position="97"/>
    </location>
    <ligand>
        <name>heme b</name>
        <dbReference type="ChEBI" id="CHEBI:60344"/>
        <label>b566</label>
    </ligand>
    <ligandPart>
        <name>Fe</name>
        <dbReference type="ChEBI" id="CHEBI:18248"/>
    </ligandPart>
</feature>
<feature type="binding site" description="axial binding residue" evidence="2">
    <location>
        <position position="182"/>
    </location>
    <ligand>
        <name>heme b</name>
        <dbReference type="ChEBI" id="CHEBI:60344"/>
        <label>b562</label>
    </ligand>
    <ligandPart>
        <name>Fe</name>
        <dbReference type="ChEBI" id="CHEBI:18248"/>
    </ligandPart>
</feature>
<feature type="binding site" description="axial binding residue" evidence="2">
    <location>
        <position position="196"/>
    </location>
    <ligand>
        <name>heme b</name>
        <dbReference type="ChEBI" id="CHEBI:60344"/>
        <label>b566</label>
    </ligand>
    <ligandPart>
        <name>Fe</name>
        <dbReference type="ChEBI" id="CHEBI:18248"/>
    </ligandPart>
</feature>
<feature type="binding site" evidence="2">
    <location>
        <position position="201"/>
    </location>
    <ligand>
        <name>a ubiquinone</name>
        <dbReference type="ChEBI" id="CHEBI:16389"/>
    </ligand>
</feature>
<sequence>MTIMRKSHPLMKMVNHAFIDLPTPSNISSWWNFGSLLGLCLIIQIASGLFLAMHYTSDTVSAFSSVAHICRDVNYGWLIRYIHANGASLFFICLYLHIGRGIYYGSYLYKETWNIGIVLLFLTMATAFMGYVLPWGQMSFWGATVITNLLSAIPYVGTDLVEWIWGGFSVDKATLTRFFAFHFILPFIIAATAMVHLLFLHETGSNNPLGIPSDSDKIPFHPYYTLKDFLGMIMVLALFLTFVLFFPDLLGDPDNYSPANPLNTPPHIKPEWYFLFAYAILRSIPNKLGGVIALVLSILVLALFPLLHTANQRSMMFRPISQFLFWTLVSDLFILTWIGGQPVEPPFIIIGQIASILYFSIILLLLPVAGLIENKILKW</sequence>
<proteinExistence type="inferred from homology"/>
<gene>
    <name type="primary">MT-CYB</name>
    <name type="synonym">COB</name>
    <name type="synonym">CYTB</name>
    <name type="synonym">MTCYB</name>
</gene>
<reference key="1">
    <citation type="journal article" date="2005" name="J. Mammal.">
        <title>Phylogenetics of the new world rodent family Heteromyidae.</title>
        <authorList>
            <person name="Alexander L.F."/>
            <person name="Riddle B.R."/>
        </authorList>
    </citation>
    <scope>NUCLEOTIDE SEQUENCE [GENOMIC DNA]</scope>
    <source>
        <strain>Isolate LVT 1267</strain>
    </source>
</reference>
<comment type="function">
    <text evidence="2">Component of the ubiquinol-cytochrome c reductase complex (complex III or cytochrome b-c1 complex) that is part of the mitochondrial respiratory chain. The b-c1 complex mediates electron transfer from ubiquinol to cytochrome c. Contributes to the generation of a proton gradient across the mitochondrial membrane that is then used for ATP synthesis.</text>
</comment>
<comment type="cofactor">
    <cofactor evidence="2">
        <name>heme b</name>
        <dbReference type="ChEBI" id="CHEBI:60344"/>
    </cofactor>
    <text evidence="2">Binds 2 heme b groups non-covalently.</text>
</comment>
<comment type="subunit">
    <text evidence="2">The cytochrome bc1 complex contains 11 subunits: 3 respiratory subunits (MT-CYB, CYC1 and UQCRFS1), 2 core proteins (UQCRC1 and UQCRC2) and 6 low-molecular weight proteins (UQCRH/QCR6, UQCRB/QCR7, UQCRQ/QCR8, UQCR10/QCR9, UQCR11/QCR10 and a cleavage product of UQCRFS1). This cytochrome bc1 complex then forms a dimer.</text>
</comment>
<comment type="subcellular location">
    <subcellularLocation>
        <location evidence="2">Mitochondrion inner membrane</location>
        <topology evidence="2">Multi-pass membrane protein</topology>
    </subcellularLocation>
</comment>
<comment type="miscellaneous">
    <text evidence="1">Heme 1 (or BL or b562) is low-potential and absorbs at about 562 nm, and heme 2 (or BH or b566) is high-potential and absorbs at about 566 nm.</text>
</comment>
<comment type="similarity">
    <text evidence="3 4">Belongs to the cytochrome b family.</text>
</comment>
<comment type="caution">
    <text evidence="2">The full-length protein contains only eight transmembrane helices, not nine as predicted by bioinformatics tools.</text>
</comment>
<geneLocation type="mitochondrion"/>
<organism>
    <name type="scientific">Chaetodipus pernix</name>
    <name type="common">Sinaloan pocket mouse</name>
    <dbReference type="NCBI Taxonomy" id="38673"/>
    <lineage>
        <taxon>Eukaryota</taxon>
        <taxon>Metazoa</taxon>
        <taxon>Chordata</taxon>
        <taxon>Craniata</taxon>
        <taxon>Vertebrata</taxon>
        <taxon>Euteleostomi</taxon>
        <taxon>Mammalia</taxon>
        <taxon>Eutheria</taxon>
        <taxon>Euarchontoglires</taxon>
        <taxon>Glires</taxon>
        <taxon>Rodentia</taxon>
        <taxon>Castorimorpha</taxon>
        <taxon>Heteromyidae</taxon>
        <taxon>Perognathinae</taxon>
        <taxon>Chaetodipus</taxon>
    </lineage>
</organism>